<feature type="chain" id="PRO_0000317761" description="Probable glutathione peroxidase 8">
    <location>
        <begin position="1"/>
        <end position="210"/>
    </location>
</feature>
<feature type="transmembrane region" description="Helical" evidence="1">
    <location>
        <begin position="21"/>
        <end position="40"/>
    </location>
</feature>
<comment type="catalytic activity">
    <reaction>
        <text>2 glutathione + H2O2 = glutathione disulfide + 2 H2O</text>
        <dbReference type="Rhea" id="RHEA:16833"/>
        <dbReference type="ChEBI" id="CHEBI:15377"/>
        <dbReference type="ChEBI" id="CHEBI:16240"/>
        <dbReference type="ChEBI" id="CHEBI:57925"/>
        <dbReference type="ChEBI" id="CHEBI:58297"/>
        <dbReference type="EC" id="1.11.1.9"/>
    </reaction>
</comment>
<comment type="subcellular location">
    <subcellularLocation>
        <location evidence="2">Membrane</location>
        <topology evidence="2">Single-pass membrane protein</topology>
    </subcellularLocation>
</comment>
<comment type="similarity">
    <text evidence="2">Belongs to the glutathione peroxidase family.</text>
</comment>
<comment type="caution">
    <text evidence="2">Ser-80 is present instead of the conserved Cys/Sec which is expected to be the active site residue.</text>
</comment>
<keyword id="KW-0472">Membrane</keyword>
<keyword id="KW-0560">Oxidoreductase</keyword>
<keyword id="KW-0575">Peroxidase</keyword>
<keyword id="KW-1185">Reference proteome</keyword>
<keyword id="KW-0812">Transmembrane</keyword>
<keyword id="KW-1133">Transmembrane helix</keyword>
<evidence type="ECO:0000255" key="1"/>
<evidence type="ECO:0000305" key="2"/>
<gene>
    <name type="primary">gpx8</name>
    <name type="ORF">GSTENG00029623001</name>
</gene>
<organism>
    <name type="scientific">Tetraodon nigroviridis</name>
    <name type="common">Spotted green pufferfish</name>
    <name type="synonym">Chelonodon nigroviridis</name>
    <dbReference type="NCBI Taxonomy" id="99883"/>
    <lineage>
        <taxon>Eukaryota</taxon>
        <taxon>Metazoa</taxon>
        <taxon>Chordata</taxon>
        <taxon>Craniata</taxon>
        <taxon>Vertebrata</taxon>
        <taxon>Euteleostomi</taxon>
        <taxon>Actinopterygii</taxon>
        <taxon>Neopterygii</taxon>
        <taxon>Teleostei</taxon>
        <taxon>Neoteleostei</taxon>
        <taxon>Acanthomorphata</taxon>
        <taxon>Eupercaria</taxon>
        <taxon>Tetraodontiformes</taxon>
        <taxon>Tetradontoidea</taxon>
        <taxon>Tetraodontidae</taxon>
        <taxon>Tetraodon</taxon>
    </lineage>
</organism>
<dbReference type="EC" id="1.11.1.9"/>
<dbReference type="EMBL" id="CAAE01014999">
    <property type="protein sequence ID" value="CAG08606.1"/>
    <property type="molecule type" value="Genomic_DNA"/>
</dbReference>
<dbReference type="SMR" id="Q4RSM6"/>
<dbReference type="FunCoup" id="Q4RSM6">
    <property type="interactions" value="96"/>
</dbReference>
<dbReference type="STRING" id="99883.ENSTNIP00000019037"/>
<dbReference type="Ensembl" id="ENSTNIT00000019265.1">
    <property type="protein sequence ID" value="ENSTNIP00000019037.1"/>
    <property type="gene ID" value="ENSTNIG00000015949.1"/>
</dbReference>
<dbReference type="KEGG" id="tng:GSTEN00029623G001"/>
<dbReference type="GeneTree" id="ENSGT00940000159371"/>
<dbReference type="HOGENOM" id="CLU_029507_0_1_1"/>
<dbReference type="InParanoid" id="Q4RSM6"/>
<dbReference type="OMA" id="PTWNFCK"/>
<dbReference type="OrthoDB" id="446890at2759"/>
<dbReference type="TreeFam" id="TF331942"/>
<dbReference type="Proteomes" id="UP000007303">
    <property type="component" value="Unassembled WGS sequence"/>
</dbReference>
<dbReference type="GO" id="GO:0016020">
    <property type="term" value="C:membrane"/>
    <property type="evidence" value="ECO:0007669"/>
    <property type="project" value="UniProtKB-SubCell"/>
</dbReference>
<dbReference type="GO" id="GO:0004602">
    <property type="term" value="F:glutathione peroxidase activity"/>
    <property type="evidence" value="ECO:0007669"/>
    <property type="project" value="UniProtKB-EC"/>
</dbReference>
<dbReference type="GO" id="GO:0006979">
    <property type="term" value="P:response to oxidative stress"/>
    <property type="evidence" value="ECO:0007669"/>
    <property type="project" value="InterPro"/>
</dbReference>
<dbReference type="CDD" id="cd00340">
    <property type="entry name" value="GSH_Peroxidase"/>
    <property type="match status" value="1"/>
</dbReference>
<dbReference type="FunFam" id="3.40.30.10:FF:000049">
    <property type="entry name" value="Glutathione peroxidase"/>
    <property type="match status" value="1"/>
</dbReference>
<dbReference type="Gene3D" id="3.40.30.10">
    <property type="entry name" value="Glutaredoxin"/>
    <property type="match status" value="1"/>
</dbReference>
<dbReference type="InterPro" id="IPR013376">
    <property type="entry name" value="Glut_perox_Gpx7"/>
</dbReference>
<dbReference type="InterPro" id="IPR000889">
    <property type="entry name" value="Glutathione_peroxidase"/>
</dbReference>
<dbReference type="InterPro" id="IPR036249">
    <property type="entry name" value="Thioredoxin-like_sf"/>
</dbReference>
<dbReference type="NCBIfam" id="TIGR02540">
    <property type="entry name" value="gpx7"/>
    <property type="match status" value="1"/>
</dbReference>
<dbReference type="PANTHER" id="PTHR11592">
    <property type="entry name" value="GLUTATHIONE PEROXIDASE"/>
    <property type="match status" value="1"/>
</dbReference>
<dbReference type="PANTHER" id="PTHR11592:SF7">
    <property type="entry name" value="GLUTATHIONE PEROXIDASE 8-RELATED"/>
    <property type="match status" value="1"/>
</dbReference>
<dbReference type="Pfam" id="PF00255">
    <property type="entry name" value="GSHPx"/>
    <property type="match status" value="1"/>
</dbReference>
<dbReference type="PRINTS" id="PR01011">
    <property type="entry name" value="GLUTPROXDASE"/>
</dbReference>
<dbReference type="SUPFAM" id="SSF52833">
    <property type="entry name" value="Thioredoxin-like"/>
    <property type="match status" value="1"/>
</dbReference>
<dbReference type="PROSITE" id="PS51355">
    <property type="entry name" value="GLUTATHIONE_PEROXID_3"/>
    <property type="match status" value="1"/>
</dbReference>
<sequence>MEALGGYPTRSSNPKAKKLTVLLSMTVGVGCLLLLQTQLLKPRRPSDFYSFEVKDAKGRTVSLEKYRGKASLVVNVASRSEQTESNYRSLQELHRELGPSHFNVLAFPCAQFGETETGSSRDSEAFAKATYGVTFPFFSRIKIMGSEAEPAFRFLTDSVQKVPRWNFWKFLVNPEGKVVRFWRTDEPMESIRREVTALVREIILKKRVEL</sequence>
<name>GPX8_TETNG</name>
<proteinExistence type="inferred from homology"/>
<reference key="1">
    <citation type="journal article" date="2004" name="Nature">
        <title>Genome duplication in the teleost fish Tetraodon nigroviridis reveals the early vertebrate proto-karyotype.</title>
        <authorList>
            <person name="Jaillon O."/>
            <person name="Aury J.-M."/>
            <person name="Brunet F."/>
            <person name="Petit J.-L."/>
            <person name="Stange-Thomann N."/>
            <person name="Mauceli E."/>
            <person name="Bouneau L."/>
            <person name="Fischer C."/>
            <person name="Ozouf-Costaz C."/>
            <person name="Bernot A."/>
            <person name="Nicaud S."/>
            <person name="Jaffe D."/>
            <person name="Fisher S."/>
            <person name="Lutfalla G."/>
            <person name="Dossat C."/>
            <person name="Segurens B."/>
            <person name="Dasilva C."/>
            <person name="Salanoubat M."/>
            <person name="Levy M."/>
            <person name="Boudet N."/>
            <person name="Castellano S."/>
            <person name="Anthouard V."/>
            <person name="Jubin C."/>
            <person name="Castelli V."/>
            <person name="Katinka M."/>
            <person name="Vacherie B."/>
            <person name="Biemont C."/>
            <person name="Skalli Z."/>
            <person name="Cattolico L."/>
            <person name="Poulain J."/>
            <person name="De Berardinis V."/>
            <person name="Cruaud C."/>
            <person name="Duprat S."/>
            <person name="Brottier P."/>
            <person name="Coutanceau J.-P."/>
            <person name="Gouzy J."/>
            <person name="Parra G."/>
            <person name="Lardier G."/>
            <person name="Chapple C."/>
            <person name="McKernan K.J."/>
            <person name="McEwan P."/>
            <person name="Bosak S."/>
            <person name="Kellis M."/>
            <person name="Volff J.-N."/>
            <person name="Guigo R."/>
            <person name="Zody M.C."/>
            <person name="Mesirov J."/>
            <person name="Lindblad-Toh K."/>
            <person name="Birren B."/>
            <person name="Nusbaum C."/>
            <person name="Kahn D."/>
            <person name="Robinson-Rechavi M."/>
            <person name="Laudet V."/>
            <person name="Schachter V."/>
            <person name="Quetier F."/>
            <person name="Saurin W."/>
            <person name="Scarpelli C."/>
            <person name="Wincker P."/>
            <person name="Lander E.S."/>
            <person name="Weissenbach J."/>
            <person name="Roest Crollius H."/>
        </authorList>
    </citation>
    <scope>NUCLEOTIDE SEQUENCE [LARGE SCALE GENOMIC DNA]</scope>
</reference>
<protein>
    <recommendedName>
        <fullName>Probable glutathione peroxidase 8</fullName>
        <shortName>GPx-8</shortName>
        <shortName>GSHPx-8</shortName>
        <ecNumber>1.11.1.9</ecNumber>
    </recommendedName>
</protein>
<accession>Q4RSM6</accession>